<evidence type="ECO:0000255" key="1">
    <source>
        <dbReference type="HAMAP-Rule" id="MF_00485"/>
    </source>
</evidence>
<evidence type="ECO:0000305" key="2"/>
<sequence length="255" mass="28756">MARMGGRRHLKTLAAPKFWPVRQRAGIFTVKPSPGPHPIERSIPLLILVRDVLGYAKTAREARKLIAEGHFKIDGRVRRNYKYPVGFMDVIEIVDTGEFYRVLPYPTRFFTLHPISKEEAQFKLGRIEDKSTVKGGHIQLHLHDGRNVLIRVSDPTNPVEAKPYKTLGTVKISIPEQQLLGYAPLEVGSLVIIFGGRNVGRVGRIVSIQPGMRRRGIVTIEDARGEKIQTSLEYVFVIAPPNEEPWISLPEGAWK</sequence>
<dbReference type="EMBL" id="CP000493">
    <property type="protein sequence ID" value="ABM81142.1"/>
    <property type="molecule type" value="Genomic_DNA"/>
</dbReference>
<dbReference type="RefSeq" id="WP_011822460.1">
    <property type="nucleotide sequence ID" value="NC_008818.1"/>
</dbReference>
<dbReference type="SMR" id="A2BMD1"/>
<dbReference type="STRING" id="415426.Hbut_1312"/>
<dbReference type="EnsemblBacteria" id="ABM81142">
    <property type="protein sequence ID" value="ABM81142"/>
    <property type="gene ID" value="Hbut_1312"/>
</dbReference>
<dbReference type="GeneID" id="4782923"/>
<dbReference type="KEGG" id="hbu:Hbut_1312"/>
<dbReference type="eggNOG" id="arCOG04093">
    <property type="taxonomic scope" value="Archaea"/>
</dbReference>
<dbReference type="HOGENOM" id="CLU_060400_0_0_2"/>
<dbReference type="OrthoDB" id="372073at2157"/>
<dbReference type="Proteomes" id="UP000002593">
    <property type="component" value="Chromosome"/>
</dbReference>
<dbReference type="GO" id="GO:0022627">
    <property type="term" value="C:cytosolic small ribosomal subunit"/>
    <property type="evidence" value="ECO:0007669"/>
    <property type="project" value="TreeGrafter"/>
</dbReference>
<dbReference type="GO" id="GO:0019843">
    <property type="term" value="F:rRNA binding"/>
    <property type="evidence" value="ECO:0007669"/>
    <property type="project" value="UniProtKB-KW"/>
</dbReference>
<dbReference type="GO" id="GO:0003735">
    <property type="term" value="F:structural constituent of ribosome"/>
    <property type="evidence" value="ECO:0007669"/>
    <property type="project" value="InterPro"/>
</dbReference>
<dbReference type="GO" id="GO:0006412">
    <property type="term" value="P:translation"/>
    <property type="evidence" value="ECO:0007669"/>
    <property type="project" value="UniProtKB-UniRule"/>
</dbReference>
<dbReference type="CDD" id="cd06087">
    <property type="entry name" value="KOW_RPS4"/>
    <property type="match status" value="1"/>
</dbReference>
<dbReference type="CDD" id="cd00165">
    <property type="entry name" value="S4"/>
    <property type="match status" value="1"/>
</dbReference>
<dbReference type="FunFam" id="3.10.290.10:FF:000002">
    <property type="entry name" value="40S ribosomal protein S4"/>
    <property type="match status" value="1"/>
</dbReference>
<dbReference type="Gene3D" id="2.30.30.30">
    <property type="match status" value="1"/>
</dbReference>
<dbReference type="Gene3D" id="2.40.50.740">
    <property type="match status" value="1"/>
</dbReference>
<dbReference type="Gene3D" id="3.10.290.10">
    <property type="entry name" value="RNA-binding S4 domain"/>
    <property type="match status" value="1"/>
</dbReference>
<dbReference type="HAMAP" id="MF_00485">
    <property type="entry name" value="Ribosomal_eS4"/>
    <property type="match status" value="1"/>
</dbReference>
<dbReference type="InterPro" id="IPR014722">
    <property type="entry name" value="Rib_uL2_dom2"/>
</dbReference>
<dbReference type="InterPro" id="IPR000876">
    <property type="entry name" value="Ribosomal_eS4"/>
</dbReference>
<dbReference type="InterPro" id="IPR013845">
    <property type="entry name" value="Ribosomal_eS4_central_region"/>
</dbReference>
<dbReference type="InterPro" id="IPR038237">
    <property type="entry name" value="Ribosomal_eS4_central_sf"/>
</dbReference>
<dbReference type="InterPro" id="IPR041982">
    <property type="entry name" value="Ribosomal_eS4_KOW"/>
</dbReference>
<dbReference type="InterPro" id="IPR013843">
    <property type="entry name" value="Ribosomal_eS4_N"/>
</dbReference>
<dbReference type="InterPro" id="IPR002942">
    <property type="entry name" value="S4_RNA-bd"/>
</dbReference>
<dbReference type="InterPro" id="IPR036986">
    <property type="entry name" value="S4_RNA-bd_sf"/>
</dbReference>
<dbReference type="NCBIfam" id="NF003312">
    <property type="entry name" value="PRK04313.1"/>
    <property type="match status" value="1"/>
</dbReference>
<dbReference type="PANTHER" id="PTHR11581">
    <property type="entry name" value="30S/40S RIBOSOMAL PROTEIN S4"/>
    <property type="match status" value="1"/>
</dbReference>
<dbReference type="PANTHER" id="PTHR11581:SF0">
    <property type="entry name" value="SMALL RIBOSOMAL SUBUNIT PROTEIN ES4"/>
    <property type="match status" value="1"/>
</dbReference>
<dbReference type="Pfam" id="PF00900">
    <property type="entry name" value="Ribosomal_S4e"/>
    <property type="match status" value="1"/>
</dbReference>
<dbReference type="Pfam" id="PF08071">
    <property type="entry name" value="RS4NT"/>
    <property type="match status" value="1"/>
</dbReference>
<dbReference type="Pfam" id="PF01479">
    <property type="entry name" value="S4"/>
    <property type="match status" value="1"/>
</dbReference>
<dbReference type="PIRSF" id="PIRSF002116">
    <property type="entry name" value="Ribosomal_S4"/>
    <property type="match status" value="1"/>
</dbReference>
<dbReference type="SMART" id="SM00363">
    <property type="entry name" value="S4"/>
    <property type="match status" value="1"/>
</dbReference>
<dbReference type="SUPFAM" id="SSF55174">
    <property type="entry name" value="Alpha-L RNA-binding motif"/>
    <property type="match status" value="1"/>
</dbReference>
<dbReference type="PROSITE" id="PS50889">
    <property type="entry name" value="S4"/>
    <property type="match status" value="1"/>
</dbReference>
<feature type="chain" id="PRO_1000081334" description="Small ribosomal subunit protein eS4">
    <location>
        <begin position="1"/>
        <end position="255"/>
    </location>
</feature>
<feature type="domain" description="S4 RNA-binding" evidence="1">
    <location>
        <begin position="43"/>
        <end position="115"/>
    </location>
</feature>
<comment type="similarity">
    <text evidence="1">Belongs to the eukaryotic ribosomal protein eS4 family.</text>
</comment>
<reference key="1">
    <citation type="journal article" date="2007" name="Archaea">
        <title>The genome of Hyperthermus butylicus: a sulfur-reducing, peptide fermenting, neutrophilic Crenarchaeote growing up to 108 degrees C.</title>
        <authorList>
            <person name="Bruegger K."/>
            <person name="Chen L."/>
            <person name="Stark M."/>
            <person name="Zibat A."/>
            <person name="Redder P."/>
            <person name="Ruepp A."/>
            <person name="Awayez M."/>
            <person name="She Q."/>
            <person name="Garrett R.A."/>
            <person name="Klenk H.-P."/>
        </authorList>
    </citation>
    <scope>NUCLEOTIDE SEQUENCE [LARGE SCALE GENOMIC DNA]</scope>
    <source>
        <strain>DSM 5456 / JCM 9403 / PLM1-5</strain>
    </source>
</reference>
<name>RS4E_HYPBU</name>
<gene>
    <name evidence="1" type="primary">rps4e</name>
    <name type="ordered locus">Hbut_1312</name>
</gene>
<organism>
    <name type="scientific">Hyperthermus butylicus (strain DSM 5456 / JCM 9403 / PLM1-5)</name>
    <dbReference type="NCBI Taxonomy" id="415426"/>
    <lineage>
        <taxon>Archaea</taxon>
        <taxon>Thermoproteota</taxon>
        <taxon>Thermoprotei</taxon>
        <taxon>Desulfurococcales</taxon>
        <taxon>Pyrodictiaceae</taxon>
        <taxon>Hyperthermus</taxon>
    </lineage>
</organism>
<keyword id="KW-1185">Reference proteome</keyword>
<keyword id="KW-0687">Ribonucleoprotein</keyword>
<keyword id="KW-0689">Ribosomal protein</keyword>
<keyword id="KW-0694">RNA-binding</keyword>
<keyword id="KW-0699">rRNA-binding</keyword>
<proteinExistence type="inferred from homology"/>
<protein>
    <recommendedName>
        <fullName evidence="1">Small ribosomal subunit protein eS4</fullName>
    </recommendedName>
    <alternativeName>
        <fullName evidence="2">30S ribosomal protein S4e</fullName>
    </alternativeName>
</protein>
<accession>A2BMD1</accession>